<feature type="chain" id="PRO_0000427760" description="Probable bifunctional transcriptional activator/DNA repair enzyme AlkA">
    <location>
        <begin position="1"/>
        <end position="496"/>
    </location>
</feature>
<feature type="domain" description="HTH araC/xylS-type" evidence="2">
    <location>
        <begin position="87"/>
        <end position="185"/>
    </location>
</feature>
<feature type="DNA-binding region" description="H-T-H motif" evidence="2">
    <location>
        <begin position="104"/>
        <end position="125"/>
    </location>
</feature>
<feature type="region of interest" description="Methylphosphotriester-DNA--protein-cysteine methyltransferase">
    <location>
        <begin position="1"/>
        <end position="185"/>
    </location>
</feature>
<feature type="region of interest" description="DNA-3-methyladenine glycosylase">
    <location>
        <begin position="202"/>
        <end position="354"/>
    </location>
</feature>
<feature type="active site" description="Nucleophile; methyl group acceptor from methylphosphotriester" evidence="1">
    <location>
        <position position="34"/>
    </location>
</feature>
<feature type="active site" description="Proton acceptor; for DNA glycosylase activity" evidence="1">
    <location>
        <position position="441"/>
    </location>
</feature>
<feature type="binding site" evidence="1">
    <location>
        <position position="30"/>
    </location>
    <ligand>
        <name>DNA</name>
        <dbReference type="ChEBI" id="CHEBI:16991"/>
    </ligand>
</feature>
<feature type="binding site" evidence="1">
    <location>
        <position position="34"/>
    </location>
    <ligand>
        <name>Zn(2+)</name>
        <dbReference type="ChEBI" id="CHEBI:29105"/>
    </ligand>
</feature>
<feature type="binding site" evidence="1">
    <location>
        <position position="38"/>
    </location>
    <ligand>
        <name>Zn(2+)</name>
        <dbReference type="ChEBI" id="CHEBI:29105"/>
    </ligand>
</feature>
<feature type="binding site" evidence="1">
    <location>
        <position position="41"/>
    </location>
    <ligand>
        <name>DNA</name>
        <dbReference type="ChEBI" id="CHEBI:16991"/>
    </ligand>
</feature>
<feature type="binding site" evidence="1">
    <location>
        <position position="63"/>
    </location>
    <ligand>
        <name>DNA</name>
        <dbReference type="ChEBI" id="CHEBI:16991"/>
    </ligand>
</feature>
<feature type="binding site" evidence="1">
    <location>
        <position position="65"/>
    </location>
    <ligand>
        <name>Zn(2+)</name>
        <dbReference type="ChEBI" id="CHEBI:29105"/>
    </ligand>
</feature>
<feature type="binding site" evidence="1">
    <location>
        <position position="68"/>
    </location>
    <ligand>
        <name>Zn(2+)</name>
        <dbReference type="ChEBI" id="CHEBI:29105"/>
    </ligand>
</feature>
<feature type="site" description="Determinant for substrate specificity and/or DNA glycosylase activity" evidence="1">
    <location>
        <position position="421"/>
    </location>
</feature>
<sequence>MHDDFERCYRAIQSKDARFDGWFVVAVLTTGVYCRPSCPVRPPFARNVRFLPTAAAAQGEGFRACKRCRPDASPGSPEWNVRSDVVARAMRLIADGTVDRDGVSGLAAQLGYTIRQLERLLQAVVGAGPLALARAQRMQTARVLIETTNLPFGDVAFAAGFSSIRQFNDTVRLACDGTPTALRARAAARFESATASAGTVSLRLPVRAPFAFEGVFGHLAATAVPGCEEVRDGAYRRTLRLPWGNGIVSLTPAPDHVRCLLVLDDFRDLMTATARCRRLLDLDADPEAIVEALGADPDLRAVVGKAPGQRIPRTVDEAEFAVRAVLAQQVSTKAASTHAGRLVAAYGRPVHDRHGALTHTFPSIEQLAEIDPGHLAVPKARQRTINALVASLADKSLVLDAGCDWQRARGQLLALPGVGPWTAEVIAMRGLGDPDAFPASDLGLRLAAKKLGLPAQRRALTVHSARWRPWRSYATQHLWTTLEHPVNQWPPQEKIA</sequence>
<evidence type="ECO:0000250" key="1"/>
<evidence type="ECO:0000255" key="2">
    <source>
        <dbReference type="PROSITE-ProRule" id="PRU00593"/>
    </source>
</evidence>
<evidence type="ECO:0000305" key="3"/>
<dbReference type="EC" id="2.1.1.n11"/>
<dbReference type="EC" id="3.2.2.21"/>
<dbReference type="EMBL" id="AE000516">
    <property type="protein sequence ID" value="AAK45620.1"/>
    <property type="molecule type" value="Genomic_DNA"/>
</dbReference>
<dbReference type="PIR" id="A70769">
    <property type="entry name" value="A70769"/>
</dbReference>
<dbReference type="RefSeq" id="WP_003900313.1">
    <property type="nucleotide sequence ID" value="NZ_KK341227.1"/>
</dbReference>
<dbReference type="SMR" id="P9WJW2"/>
<dbReference type="KEGG" id="mtc:MT1358"/>
<dbReference type="PATRIC" id="fig|83331.31.peg.1464"/>
<dbReference type="HOGENOM" id="CLU_000445_72_6_11"/>
<dbReference type="Proteomes" id="UP000001020">
    <property type="component" value="Chromosome"/>
</dbReference>
<dbReference type="GO" id="GO:0005737">
    <property type="term" value="C:cytoplasm"/>
    <property type="evidence" value="ECO:0007669"/>
    <property type="project" value="TreeGrafter"/>
</dbReference>
<dbReference type="GO" id="GO:0032993">
    <property type="term" value="C:protein-DNA complex"/>
    <property type="evidence" value="ECO:0007669"/>
    <property type="project" value="TreeGrafter"/>
</dbReference>
<dbReference type="GO" id="GO:0032131">
    <property type="term" value="F:alkylated DNA binding"/>
    <property type="evidence" value="ECO:0007669"/>
    <property type="project" value="TreeGrafter"/>
</dbReference>
<dbReference type="GO" id="GO:0008725">
    <property type="term" value="F:DNA-3-methyladenine glycosylase activity"/>
    <property type="evidence" value="ECO:0007669"/>
    <property type="project" value="TreeGrafter"/>
</dbReference>
<dbReference type="GO" id="GO:0043916">
    <property type="term" value="F:DNA-7-methylguanine glycosylase activity"/>
    <property type="evidence" value="ECO:0007669"/>
    <property type="project" value="TreeGrafter"/>
</dbReference>
<dbReference type="GO" id="GO:0003700">
    <property type="term" value="F:DNA-binding transcription factor activity"/>
    <property type="evidence" value="ECO:0007669"/>
    <property type="project" value="InterPro"/>
</dbReference>
<dbReference type="GO" id="GO:0008168">
    <property type="term" value="F:methyltransferase activity"/>
    <property type="evidence" value="ECO:0007669"/>
    <property type="project" value="UniProtKB-KW"/>
</dbReference>
<dbReference type="GO" id="GO:0043565">
    <property type="term" value="F:sequence-specific DNA binding"/>
    <property type="evidence" value="ECO:0007669"/>
    <property type="project" value="InterPro"/>
</dbReference>
<dbReference type="GO" id="GO:0008270">
    <property type="term" value="F:zinc ion binding"/>
    <property type="evidence" value="ECO:0007669"/>
    <property type="project" value="InterPro"/>
</dbReference>
<dbReference type="GO" id="GO:0006285">
    <property type="term" value="P:base-excision repair, AP site formation"/>
    <property type="evidence" value="ECO:0007669"/>
    <property type="project" value="TreeGrafter"/>
</dbReference>
<dbReference type="GO" id="GO:0006307">
    <property type="term" value="P:DNA alkylation repair"/>
    <property type="evidence" value="ECO:0007669"/>
    <property type="project" value="TreeGrafter"/>
</dbReference>
<dbReference type="GO" id="GO:0032259">
    <property type="term" value="P:methylation"/>
    <property type="evidence" value="ECO:0007669"/>
    <property type="project" value="UniProtKB-KW"/>
</dbReference>
<dbReference type="CDD" id="cd00056">
    <property type="entry name" value="ENDO3c"/>
    <property type="match status" value="1"/>
</dbReference>
<dbReference type="FunFam" id="1.10.340.30:FF:000008">
    <property type="entry name" value="DNA-3-methyladenine glycosylase 2"/>
    <property type="match status" value="1"/>
</dbReference>
<dbReference type="FunFam" id="3.30.310.20:FF:000001">
    <property type="entry name" value="DNA-3-methyladenine glycosylase 2"/>
    <property type="match status" value="1"/>
</dbReference>
<dbReference type="FunFam" id="3.40.10.10:FF:000001">
    <property type="entry name" value="DNA-3-methyladenine glycosylase 2"/>
    <property type="match status" value="1"/>
</dbReference>
<dbReference type="Gene3D" id="3.40.10.10">
    <property type="entry name" value="DNA Methylphosphotriester Repair Domain"/>
    <property type="match status" value="1"/>
</dbReference>
<dbReference type="Gene3D" id="3.30.310.20">
    <property type="entry name" value="DNA-3-methyladenine glycosylase AlkA, N-terminal domain"/>
    <property type="match status" value="1"/>
</dbReference>
<dbReference type="Gene3D" id="1.10.1670.10">
    <property type="entry name" value="Helix-hairpin-Helix base-excision DNA repair enzymes (C-terminal)"/>
    <property type="match status" value="1"/>
</dbReference>
<dbReference type="Gene3D" id="1.10.10.60">
    <property type="entry name" value="Homeodomain-like"/>
    <property type="match status" value="1"/>
</dbReference>
<dbReference type="Gene3D" id="1.10.340.30">
    <property type="entry name" value="Hypothetical protein, domain 2"/>
    <property type="match status" value="1"/>
</dbReference>
<dbReference type="InterPro" id="IPR035451">
    <property type="entry name" value="Ada-like_dom_sf"/>
</dbReference>
<dbReference type="InterPro" id="IPR004026">
    <property type="entry name" value="Ada_DNA_repair_Zn-bd"/>
</dbReference>
<dbReference type="InterPro" id="IPR010316">
    <property type="entry name" value="AlkA_N"/>
</dbReference>
<dbReference type="InterPro" id="IPR037046">
    <property type="entry name" value="AlkA_N_sf"/>
</dbReference>
<dbReference type="InterPro" id="IPR051912">
    <property type="entry name" value="Alkylbase_DNA_Glycosylase/TA"/>
</dbReference>
<dbReference type="InterPro" id="IPR011257">
    <property type="entry name" value="DNA_glycosylase"/>
</dbReference>
<dbReference type="InterPro" id="IPR003265">
    <property type="entry name" value="HhH-GPD_domain"/>
</dbReference>
<dbReference type="InterPro" id="IPR023170">
    <property type="entry name" value="HhH_base_excis_C"/>
</dbReference>
<dbReference type="InterPro" id="IPR009057">
    <property type="entry name" value="Homeodomain-like_sf"/>
</dbReference>
<dbReference type="InterPro" id="IPR018060">
    <property type="entry name" value="HTH_AraC"/>
</dbReference>
<dbReference type="InterPro" id="IPR018062">
    <property type="entry name" value="HTH_AraC-typ_CS"/>
</dbReference>
<dbReference type="PANTHER" id="PTHR43003">
    <property type="entry name" value="DNA-3-METHYLADENINE GLYCOSYLASE"/>
    <property type="match status" value="1"/>
</dbReference>
<dbReference type="PANTHER" id="PTHR43003:SF13">
    <property type="entry name" value="DNA-3-METHYLADENINE GLYCOSYLASE 2"/>
    <property type="match status" value="1"/>
</dbReference>
<dbReference type="Pfam" id="PF02805">
    <property type="entry name" value="Ada_Zn_binding"/>
    <property type="match status" value="1"/>
</dbReference>
<dbReference type="Pfam" id="PF06029">
    <property type="entry name" value="AlkA_N"/>
    <property type="match status" value="1"/>
</dbReference>
<dbReference type="Pfam" id="PF00730">
    <property type="entry name" value="HhH-GPD"/>
    <property type="match status" value="1"/>
</dbReference>
<dbReference type="Pfam" id="PF12833">
    <property type="entry name" value="HTH_18"/>
    <property type="match status" value="1"/>
</dbReference>
<dbReference type="SMART" id="SM01009">
    <property type="entry name" value="AlkA_N"/>
    <property type="match status" value="1"/>
</dbReference>
<dbReference type="SMART" id="SM00478">
    <property type="entry name" value="ENDO3c"/>
    <property type="match status" value="1"/>
</dbReference>
<dbReference type="SMART" id="SM00342">
    <property type="entry name" value="HTH_ARAC"/>
    <property type="match status" value="1"/>
</dbReference>
<dbReference type="SUPFAM" id="SSF57884">
    <property type="entry name" value="Ada DNA repair protein, N-terminal domain (N-Ada 10)"/>
    <property type="match status" value="1"/>
</dbReference>
<dbReference type="SUPFAM" id="SSF48150">
    <property type="entry name" value="DNA-glycosylase"/>
    <property type="match status" value="1"/>
</dbReference>
<dbReference type="SUPFAM" id="SSF46689">
    <property type="entry name" value="Homeodomain-like"/>
    <property type="match status" value="1"/>
</dbReference>
<dbReference type="SUPFAM" id="SSF55945">
    <property type="entry name" value="TATA-box binding protein-like"/>
    <property type="match status" value="1"/>
</dbReference>
<dbReference type="PROSITE" id="PS00041">
    <property type="entry name" value="HTH_ARAC_FAMILY_1"/>
    <property type="match status" value="1"/>
</dbReference>
<dbReference type="PROSITE" id="PS01124">
    <property type="entry name" value="HTH_ARAC_FAMILY_2"/>
    <property type="match status" value="1"/>
</dbReference>
<reference key="1">
    <citation type="journal article" date="2002" name="J. Bacteriol.">
        <title>Whole-genome comparison of Mycobacterium tuberculosis clinical and laboratory strains.</title>
        <authorList>
            <person name="Fleischmann R.D."/>
            <person name="Alland D."/>
            <person name="Eisen J.A."/>
            <person name="Carpenter L."/>
            <person name="White O."/>
            <person name="Peterson J.D."/>
            <person name="DeBoy R.T."/>
            <person name="Dodson R.J."/>
            <person name="Gwinn M.L."/>
            <person name="Haft D.H."/>
            <person name="Hickey E.K."/>
            <person name="Kolonay J.F."/>
            <person name="Nelson W.C."/>
            <person name="Umayam L.A."/>
            <person name="Ermolaeva M.D."/>
            <person name="Salzberg S.L."/>
            <person name="Delcher A."/>
            <person name="Utterback T.R."/>
            <person name="Weidman J.F."/>
            <person name="Khouri H.M."/>
            <person name="Gill J."/>
            <person name="Mikula A."/>
            <person name="Bishai W."/>
            <person name="Jacobs W.R. Jr."/>
            <person name="Venter J.C."/>
            <person name="Fraser C.M."/>
        </authorList>
    </citation>
    <scope>NUCLEOTIDE SEQUENCE [LARGE SCALE GENOMIC DNA]</scope>
    <source>
        <strain>CDC 1551 / Oshkosh</strain>
    </source>
</reference>
<keyword id="KW-0010">Activator</keyword>
<keyword id="KW-0227">DNA damage</keyword>
<keyword id="KW-0234">DNA repair</keyword>
<keyword id="KW-0238">DNA-binding</keyword>
<keyword id="KW-0378">Hydrolase</keyword>
<keyword id="KW-0479">Metal-binding</keyword>
<keyword id="KW-0489">Methyltransferase</keyword>
<keyword id="KW-0511">Multifunctional enzyme</keyword>
<keyword id="KW-1185">Reference proteome</keyword>
<keyword id="KW-0804">Transcription</keyword>
<keyword id="KW-0805">Transcription regulation</keyword>
<keyword id="KW-0808">Transferase</keyword>
<keyword id="KW-0862">Zinc</keyword>
<accession>P9WJW2</accession>
<accession>L0T913</accession>
<accession>Q10630</accession>
<comment type="function">
    <text evidence="1">Is involved in the adaptive response to alkylation damage in DNA caused by alkylating agents. Repairs the Sp diastereomer of DNA methylphosphotriester lesions by a direct and irreversible transfer of the methyl group to one of its own cysteine residues. Also catalyzes the hydrolysis of the deoxyribose N-glycosidic bond to excise 3-methyladenine, 3-methylguanine, 7-methylguanine, O2-methylthymine, and O2-methylcytosine from the damaged DNA polymer formed by alkylation lesions (By similarity).</text>
</comment>
<comment type="function">
    <text evidence="1">The methylation of Alka by methylphosphotriesters in DNA leads to its activation as a transcriptional regulator that activates the transcription of its own gene and other alkylation resistance genes.</text>
</comment>
<comment type="catalytic activity">
    <reaction>
        <text>(2'-deoxyribonucleoside 5'-methylphosphotriester)-DNA + L-cysteinyl-[protein] = 2'-deoxyribonucleotide-DNA + S-methyl-L-cysteinyl-[protein] + H(+)</text>
        <dbReference type="Rhea" id="RHEA:56324"/>
        <dbReference type="Rhea" id="RHEA-COMP:10131"/>
        <dbReference type="Rhea" id="RHEA-COMP:10132"/>
        <dbReference type="Rhea" id="RHEA-COMP:14462"/>
        <dbReference type="Rhea" id="RHEA-COMP:14463"/>
        <dbReference type="ChEBI" id="CHEBI:15378"/>
        <dbReference type="ChEBI" id="CHEBI:29950"/>
        <dbReference type="ChEBI" id="CHEBI:82612"/>
        <dbReference type="ChEBI" id="CHEBI:140284"/>
        <dbReference type="ChEBI" id="CHEBI:140286"/>
        <dbReference type="EC" id="2.1.1.n11"/>
    </reaction>
</comment>
<comment type="catalytic activity">
    <reaction>
        <text>Hydrolysis of alkylated DNA, releasing 3-methyladenine, 3-methylguanine, 7-methylguanine and 7-methyladenine.</text>
        <dbReference type="EC" id="3.2.2.21"/>
    </reaction>
</comment>
<comment type="cofactor">
    <cofactor evidence="1">
        <name>Zn(2+)</name>
        <dbReference type="ChEBI" id="CHEBI:29105"/>
    </cofactor>
    <text evidence="1">Binds 1 zinc ion per subunit.</text>
</comment>
<comment type="miscellaneous">
    <text>This enzyme catalyzes only one turnover and therefore is not strictly catalytic. According to one definition, an enzyme is a biocatalyst that acts repeatedly and over many reaction cycles.</text>
</comment>
<comment type="similarity">
    <text evidence="3">In the C-terminal section; belongs to the alkylbase DNA glycosidase AlkA family.</text>
</comment>
<protein>
    <recommendedName>
        <fullName>Probable bifunctional transcriptional activator/DNA repair enzyme AlkA</fullName>
    </recommendedName>
    <alternativeName>
        <fullName>Regulatory protein AlkA</fullName>
    </alternativeName>
    <domain>
        <recommendedName>
            <fullName>Methylphosphotriester-DNA--protein-cysteine S-methyltransferase</fullName>
            <ecNumber>2.1.1.n11</ecNumber>
        </recommendedName>
        <alternativeName>
            <fullName>Methylphosphotriester-DNA methyltransferase</fullName>
        </alternativeName>
    </domain>
    <domain>
        <recommendedName>
            <fullName>DNA-3-methyladenine glycosylase</fullName>
            <ecNumber>3.2.2.21</ecNumber>
        </recommendedName>
        <alternativeName>
            <fullName>DNA-3-methyladenine glycosidase</fullName>
        </alternativeName>
    </domain>
</protein>
<gene>
    <name type="primary">alkA</name>
    <name type="synonym">ada</name>
    <name type="ordered locus">MT1358</name>
</gene>
<name>ALKA_MYCTO</name>
<proteinExistence type="inferred from homology"/>
<organism>
    <name type="scientific">Mycobacterium tuberculosis (strain CDC 1551 / Oshkosh)</name>
    <dbReference type="NCBI Taxonomy" id="83331"/>
    <lineage>
        <taxon>Bacteria</taxon>
        <taxon>Bacillati</taxon>
        <taxon>Actinomycetota</taxon>
        <taxon>Actinomycetes</taxon>
        <taxon>Mycobacteriales</taxon>
        <taxon>Mycobacteriaceae</taxon>
        <taxon>Mycobacterium</taxon>
        <taxon>Mycobacterium tuberculosis complex</taxon>
    </lineage>
</organism>